<protein>
    <recommendedName>
        <fullName evidence="7">Secreted LysM effector LysM2</fullName>
    </recommendedName>
    <alternativeName>
        <fullName evidence="7">LysM domain-containing protein 2</fullName>
    </alternativeName>
</protein>
<accession>F2SIK4</accession>
<organism>
    <name type="scientific">Trichophyton rubrum (strain ATCC MYA-4607 / CBS 118892)</name>
    <name type="common">Athlete's foot fungus</name>
    <dbReference type="NCBI Taxonomy" id="559305"/>
    <lineage>
        <taxon>Eukaryota</taxon>
        <taxon>Fungi</taxon>
        <taxon>Dikarya</taxon>
        <taxon>Ascomycota</taxon>
        <taxon>Pezizomycotina</taxon>
        <taxon>Eurotiomycetes</taxon>
        <taxon>Eurotiomycetidae</taxon>
        <taxon>Onygenales</taxon>
        <taxon>Arthrodermataceae</taxon>
        <taxon>Trichophyton</taxon>
    </lineage>
</organism>
<dbReference type="EMBL" id="GG700649">
    <property type="protein sequence ID" value="EGD85603.1"/>
    <property type="molecule type" value="Genomic_DNA"/>
</dbReference>
<dbReference type="RefSeq" id="XP_003237152.1">
    <property type="nucleotide sequence ID" value="XM_003237104.1"/>
</dbReference>
<dbReference type="STRING" id="559305.F2SIK4"/>
<dbReference type="GeneID" id="10373610"/>
<dbReference type="VEuPathDB" id="FungiDB:TERG_01873"/>
<dbReference type="eggNOG" id="KOG2806">
    <property type="taxonomic scope" value="Eukaryota"/>
</dbReference>
<dbReference type="HOGENOM" id="CLU_010591_8_0_1"/>
<dbReference type="InParanoid" id="F2SIK4"/>
<dbReference type="OMA" id="NCQRWHK"/>
<dbReference type="OrthoDB" id="2281372at2759"/>
<dbReference type="Proteomes" id="UP000008864">
    <property type="component" value="Unassembled WGS sequence"/>
</dbReference>
<dbReference type="GO" id="GO:0005576">
    <property type="term" value="C:extracellular region"/>
    <property type="evidence" value="ECO:0007669"/>
    <property type="project" value="UniProtKB-SubCell"/>
</dbReference>
<dbReference type="GO" id="GO:0008061">
    <property type="term" value="F:chitin binding"/>
    <property type="evidence" value="ECO:0007669"/>
    <property type="project" value="UniProtKB-KW"/>
</dbReference>
<dbReference type="CDD" id="cd00118">
    <property type="entry name" value="LysM"/>
    <property type="match status" value="2"/>
</dbReference>
<dbReference type="Gene3D" id="3.10.350.10">
    <property type="entry name" value="LysM domain"/>
    <property type="match status" value="4"/>
</dbReference>
<dbReference type="InterPro" id="IPR052210">
    <property type="entry name" value="LysM1-like"/>
</dbReference>
<dbReference type="InterPro" id="IPR018392">
    <property type="entry name" value="LysM_dom"/>
</dbReference>
<dbReference type="InterPro" id="IPR036779">
    <property type="entry name" value="LysM_dom_sf"/>
</dbReference>
<dbReference type="PANTHER" id="PTHR34997">
    <property type="entry name" value="AM15"/>
    <property type="match status" value="1"/>
</dbReference>
<dbReference type="PANTHER" id="PTHR34997:SF2">
    <property type="entry name" value="LYSM DOMAIN-CONTAINING PROTEIN-RELATED"/>
    <property type="match status" value="1"/>
</dbReference>
<dbReference type="Pfam" id="PF01476">
    <property type="entry name" value="LysM"/>
    <property type="match status" value="2"/>
</dbReference>
<dbReference type="SMART" id="SM00257">
    <property type="entry name" value="LysM"/>
    <property type="match status" value="3"/>
</dbReference>
<dbReference type="SUPFAM" id="SSF54106">
    <property type="entry name" value="LysM domain"/>
    <property type="match status" value="2"/>
</dbReference>
<dbReference type="PROSITE" id="PS51782">
    <property type="entry name" value="LYSM"/>
    <property type="match status" value="3"/>
</dbReference>
<comment type="function">
    <text evidence="5 9">Secreted effector that binds two substrates, chitin and N-linked oligosaccharides associated with human skin glycoproteins (PubMed:30947244). Could provide the pathogen with three important functions including shielding host cell wall chitin from the human immune system, shielding the pathogen's glycoproteins from host degradation and immune surveillance, and helping facilitate pathogen adhesion to human skin (Probable).</text>
</comment>
<comment type="subcellular location">
    <subcellularLocation>
        <location evidence="5">Secreted</location>
    </subcellularLocation>
    <subcellularLocation>
        <location evidence="5">Secreted</location>
        <location evidence="5">Cell wall</location>
    </subcellularLocation>
</comment>
<comment type="induction">
    <text evidence="6">Expression is induced during growth on Sabouraud medium containing glucose as carbon source, but not on keratin powder, nor on human nail fragments.</text>
</comment>
<comment type="domain">
    <text evidence="9">The LysM (lysin motif) domains are small globular domains involved in binding chitin in eukaryotes. LysM2 contains 4 LysM domains.</text>
</comment>
<comment type="similarity">
    <text evidence="8">Belongs to the secreted LysM effector family.</text>
</comment>
<gene>
    <name evidence="7" type="primary">LysM2</name>
    <name type="ORF">TERG_01873</name>
</gene>
<reference key="1">
    <citation type="journal article" date="2012" name="MBio">
        <title>Comparative genome analysis of Trichophyton rubrum and related dermatophytes reveals candidate genes involved in infection.</title>
        <authorList>
            <person name="Martinez D.A."/>
            <person name="Oliver B.G."/>
            <person name="Graeser Y."/>
            <person name="Goldberg J.M."/>
            <person name="Li W."/>
            <person name="Martinez-Rossi N.M."/>
            <person name="Monod M."/>
            <person name="Shelest E."/>
            <person name="Barton R.C."/>
            <person name="Birch E."/>
            <person name="Brakhage A.A."/>
            <person name="Chen Z."/>
            <person name="Gurr S.J."/>
            <person name="Heiman D."/>
            <person name="Heitman J."/>
            <person name="Kosti I."/>
            <person name="Rossi A."/>
            <person name="Saif S."/>
            <person name="Samalova M."/>
            <person name="Saunders C.W."/>
            <person name="Shea T."/>
            <person name="Summerbell R.C."/>
            <person name="Xu J."/>
            <person name="Young S."/>
            <person name="Zeng Q."/>
            <person name="Birren B.W."/>
            <person name="Cuomo C.A."/>
            <person name="White T.C."/>
        </authorList>
    </citation>
    <scope>NUCLEOTIDE SEQUENCE [LARGE SCALE GENOMIC DNA]</scope>
    <source>
        <strain>ATCC MYA-4607 / CBS 118892</strain>
    </source>
</reference>
<reference key="2">
    <citation type="journal article" date="2019" name="PLoS ONE">
        <title>Trichophyton rubrum LysM proteins bind to fungal cell wall chitin and to the N-linked oligosaccharides present on human skin glycoproteins.</title>
        <authorList>
            <person name="Kar B."/>
            <person name="Patel P."/>
            <person name="Free S.J."/>
        </authorList>
    </citation>
    <scope>FUNCTION</scope>
    <scope>SUBCELLULAR LOCATION</scope>
    <scope>CHITIN-BINDING</scope>
    <scope>DOMAIN</scope>
</reference>
<reference key="3">
    <citation type="journal article" date="2020" name="Med. Mycol.">
        <title>Genes coding for LysM domains in the dermatophyte Trichophyton rubrum: A transcription analysis.</title>
        <authorList>
            <person name="Lopes L."/>
            <person name="Bitencourt T.A."/>
            <person name="Lang E.A.S."/>
            <person name="Sanches P.R."/>
            <person name="Peres N.T.A."/>
            <person name="Rossi A."/>
            <person name="Martinez-Rossi N.M."/>
        </authorList>
    </citation>
    <scope>INDUCTION</scope>
</reference>
<feature type="signal peptide" evidence="1">
    <location>
        <begin position="1"/>
        <end position="21"/>
    </location>
</feature>
<feature type="chain" id="PRO_5003289569" description="Secreted LysM effector LysM2" evidence="1">
    <location>
        <begin position="22"/>
        <end position="360"/>
    </location>
</feature>
<feature type="domain" description="LysM 1" evidence="3">
    <location>
        <begin position="37"/>
        <end position="85"/>
    </location>
</feature>
<feature type="domain" description="LysM 2" evidence="3">
    <location>
        <begin position="132"/>
        <end position="179"/>
    </location>
</feature>
<feature type="domain" description="LysM 3" evidence="3">
    <location>
        <begin position="225"/>
        <end position="272"/>
    </location>
</feature>
<feature type="domain" description="LysM 4" evidence="3">
    <location>
        <begin position="311"/>
        <end position="357"/>
    </location>
</feature>
<feature type="region of interest" description="Disordered" evidence="4">
    <location>
        <begin position="94"/>
        <end position="125"/>
    </location>
</feature>
<feature type="compositionally biased region" description="Low complexity" evidence="4">
    <location>
        <begin position="94"/>
        <end position="113"/>
    </location>
</feature>
<feature type="glycosylation site" description="N-linked (GlcNAc...) asparagine" evidence="2">
    <location>
        <position position="129"/>
    </location>
</feature>
<feature type="glycosylation site" description="N-linked (GlcNAc...) asparagine" evidence="2">
    <location>
        <position position="204"/>
    </location>
</feature>
<proteinExistence type="evidence at protein level"/>
<keyword id="KW-0134">Cell wall</keyword>
<keyword id="KW-0147">Chitin-binding</keyword>
<keyword id="KW-0325">Glycoprotein</keyword>
<keyword id="KW-1185">Reference proteome</keyword>
<keyword id="KW-0677">Repeat</keyword>
<keyword id="KW-0964">Secreted</keyword>
<keyword id="KW-0732">Signal</keyword>
<keyword id="KW-0843">Virulence</keyword>
<sequence>MKISSLSILPLLGVVSAGIHGKKPNGPTYAGTNPGCTWYLDLVDDSYTCENIESQWDLSHEAFVAWNPGVKKDCSGLKVGLSVCVEAPMESITATPTSEASTSSETSSASPTASRPPLPSPTQDGLVSNCTKFHQAVSGDTCSKIISRYKPITLDQFIEWNPALEKDCSGLWSGYYYCVGIPGTPSAPLTSMPASTAHSGTNSNATVKPAAPGPTQDGIANNCQRWHKAVSGNTCASLLKQYGTFTLEEFIKWNPAVGEDCSGLWLNYYYCIGIPGTPTTKNSVPKPTTTACNTPGLPSPTQPGAICQCSKWHQVRQGETCDSITRNYRISISKFKEWNPNVGKDCYGLWLRYYVCVGGK</sequence>
<name>LYSM2_TRIRC</name>
<evidence type="ECO:0000255" key="1"/>
<evidence type="ECO:0000255" key="2">
    <source>
        <dbReference type="PROSITE-ProRule" id="PRU00498"/>
    </source>
</evidence>
<evidence type="ECO:0000255" key="3">
    <source>
        <dbReference type="PROSITE-ProRule" id="PRU01118"/>
    </source>
</evidence>
<evidence type="ECO:0000256" key="4">
    <source>
        <dbReference type="SAM" id="MobiDB-lite"/>
    </source>
</evidence>
<evidence type="ECO:0000269" key="5">
    <source>
    </source>
</evidence>
<evidence type="ECO:0000269" key="6">
    <source>
    </source>
</evidence>
<evidence type="ECO:0000303" key="7">
    <source>
    </source>
</evidence>
<evidence type="ECO:0000305" key="8"/>
<evidence type="ECO:0000305" key="9">
    <source>
    </source>
</evidence>